<reference key="1">
    <citation type="journal article" date="2008" name="PLoS Genet.">
        <title>Genomic islands in the pathogenic filamentous fungus Aspergillus fumigatus.</title>
        <authorList>
            <person name="Fedorova N.D."/>
            <person name="Khaldi N."/>
            <person name="Joardar V.S."/>
            <person name="Maiti R."/>
            <person name="Amedeo P."/>
            <person name="Anderson M.J."/>
            <person name="Crabtree J."/>
            <person name="Silva J.C."/>
            <person name="Badger J.H."/>
            <person name="Albarraq A."/>
            <person name="Angiuoli S."/>
            <person name="Bussey H."/>
            <person name="Bowyer P."/>
            <person name="Cotty P.J."/>
            <person name="Dyer P.S."/>
            <person name="Egan A."/>
            <person name="Galens K."/>
            <person name="Fraser-Liggett C.M."/>
            <person name="Haas B.J."/>
            <person name="Inman J.M."/>
            <person name="Kent R."/>
            <person name="Lemieux S."/>
            <person name="Malavazi I."/>
            <person name="Orvis J."/>
            <person name="Roemer T."/>
            <person name="Ronning C.M."/>
            <person name="Sundaram J.P."/>
            <person name="Sutton G."/>
            <person name="Turner G."/>
            <person name="Venter J.C."/>
            <person name="White O.R."/>
            <person name="Whitty B.R."/>
            <person name="Youngman P."/>
            <person name="Wolfe K.H."/>
            <person name="Goldman G.H."/>
            <person name="Wortman J.R."/>
            <person name="Jiang B."/>
            <person name="Denning D.W."/>
            <person name="Nierman W.C."/>
        </authorList>
    </citation>
    <scope>NUCLEOTIDE SEQUENCE [LARGE SCALE GENOMIC DNA]</scope>
    <source>
        <strain>ATCC 1020 / DSM 3700 / CBS 544.65 / FGSC A1164 / JCM 1740 / NRRL 181 / WB 181</strain>
    </source>
</reference>
<sequence>MDGIISNGSPGASVTRPLPEPLEKPPTPPPPPPEDSAAPPPPPDTSVPPPPPEDAPPAPPPEKKKKVGWGAKRPAATPLSVEELVRKKREADAAAAKPKFLSKAERERIALEKRAKEVEAGRRFKSEPSTNGTDRSGTQSPSVYSETPNGDERSIPTGPRAMRNSEVPTGPAAMRNKNYDMSPPPPPKPMSFSLTDGKGDSKRQAEEDEAAAQAALIKQKYMGTEKTSSFSAKKKRKRTTDRKFNFEWNAEEDTSGDYNPLYQQRHEANFYGRGRLAGFGDDVADTLAQKYARALEDRDREAGSIRAREILEMERRRREESTRNQLDKHWSEKKLEHMRERDWRIFKEDFNISTKGGSVPNPMRSWEESGLPKRLLELVDQVGYKEPTPIQRAAIPIALQSRDLIGVAVTGSGKTASFLLPLLVYISELPRIDEFEWRKNDGPYAIVLAPTRELAQQIEIEARKFTQPLGFNVVSIVGGHSFEEQAYSLRNGAEIIIATPGRLVDCIERRLLVLSQCCYVIMDEADRMIDLGFEEPVNKILDALPVTNEKPDTEEAENSAAMRSHRYRQTMMYTATMPSAVERIARKYLRRPAIVTIGSAGEAVDTVEQRVEMIAGEDKRKKRLADILSSGEFRPPIIVFVNIKRNCDAIAREIKQMGFSSVTLHGSKTQEQREAALASVRNGSTDVLVATDLAGRGIDVPDVSLVVNFNMANSIESYTHRIGRTGRAGKSGVAITFLGNEDADVMYDLKQMLMKSPISRVPEELRKHEAAQSKPNRGFAKKSDDSSGFGNKSGWQ</sequence>
<gene>
    <name type="primary">prp28</name>
    <name type="ORF">NFIA_107150</name>
</gene>
<keyword id="KW-0067">ATP-binding</keyword>
<keyword id="KW-0963">Cytoplasm</keyword>
<keyword id="KW-0347">Helicase</keyword>
<keyword id="KW-0378">Hydrolase</keyword>
<keyword id="KW-0507">mRNA processing</keyword>
<keyword id="KW-0508">mRNA splicing</keyword>
<keyword id="KW-0547">Nucleotide-binding</keyword>
<keyword id="KW-0539">Nucleus</keyword>
<keyword id="KW-1185">Reference proteome</keyword>
<comment type="function">
    <text evidence="1">ATP-dependent RNA helicase involved in mRNA splicing. May destabilize the U1/5'-splice site duplex to permit an effective competition for the 5'-splice site by the U6 snRNA, resulting in the switch between U1 and U6 at the 5'-splice site. May also act to unwind the U4/U6 base-pairing interaction in the U4/U6/U5 snRNP, facilitating the first covalent step of splicing (By similarity).</text>
</comment>
<comment type="catalytic activity">
    <reaction>
        <text>ATP + H2O = ADP + phosphate + H(+)</text>
        <dbReference type="Rhea" id="RHEA:13065"/>
        <dbReference type="ChEBI" id="CHEBI:15377"/>
        <dbReference type="ChEBI" id="CHEBI:15378"/>
        <dbReference type="ChEBI" id="CHEBI:30616"/>
        <dbReference type="ChEBI" id="CHEBI:43474"/>
        <dbReference type="ChEBI" id="CHEBI:456216"/>
        <dbReference type="EC" id="3.6.4.13"/>
    </reaction>
</comment>
<comment type="subunit">
    <text evidence="1">Component of the U5 snRNP complex.</text>
</comment>
<comment type="subcellular location">
    <subcellularLocation>
        <location evidence="1">Cytoplasm</location>
    </subcellularLocation>
    <subcellularLocation>
        <location evidence="1">Nucleus</location>
    </subcellularLocation>
</comment>
<comment type="domain">
    <text>The Q motif is unique to and characteristic of the DEAD box family of RNA helicases and controls ATP binding and hydrolysis.</text>
</comment>
<comment type="similarity">
    <text evidence="5">Belongs to the DEAD box helicase family. DDX23/PRP28 subfamily.</text>
</comment>
<dbReference type="EC" id="3.6.4.13"/>
<dbReference type="EMBL" id="DS027685">
    <property type="protein sequence ID" value="EAW25224.1"/>
    <property type="molecule type" value="Genomic_DNA"/>
</dbReference>
<dbReference type="RefSeq" id="XP_001267121.1">
    <property type="nucleotide sequence ID" value="XM_001267120.1"/>
</dbReference>
<dbReference type="SMR" id="A1CX72"/>
<dbReference type="STRING" id="331117.A1CX72"/>
<dbReference type="EnsemblFungi" id="EAW25224">
    <property type="protein sequence ID" value="EAW25224"/>
    <property type="gene ID" value="NFIA_107150"/>
</dbReference>
<dbReference type="GeneID" id="4593748"/>
<dbReference type="KEGG" id="nfi:NFIA_107150"/>
<dbReference type="VEuPathDB" id="FungiDB:NFIA_107150"/>
<dbReference type="eggNOG" id="KOG0333">
    <property type="taxonomic scope" value="Eukaryota"/>
</dbReference>
<dbReference type="HOGENOM" id="CLU_003041_11_3_1"/>
<dbReference type="OMA" id="ARDIKHM"/>
<dbReference type="OrthoDB" id="196131at2759"/>
<dbReference type="Proteomes" id="UP000006702">
    <property type="component" value="Unassembled WGS sequence"/>
</dbReference>
<dbReference type="GO" id="GO:0005737">
    <property type="term" value="C:cytoplasm"/>
    <property type="evidence" value="ECO:0007669"/>
    <property type="project" value="UniProtKB-SubCell"/>
</dbReference>
<dbReference type="GO" id="GO:0005634">
    <property type="term" value="C:nucleus"/>
    <property type="evidence" value="ECO:0007669"/>
    <property type="project" value="UniProtKB-SubCell"/>
</dbReference>
<dbReference type="GO" id="GO:0005524">
    <property type="term" value="F:ATP binding"/>
    <property type="evidence" value="ECO:0007669"/>
    <property type="project" value="UniProtKB-KW"/>
</dbReference>
<dbReference type="GO" id="GO:0016887">
    <property type="term" value="F:ATP hydrolysis activity"/>
    <property type="evidence" value="ECO:0007669"/>
    <property type="project" value="RHEA"/>
</dbReference>
<dbReference type="GO" id="GO:0003676">
    <property type="term" value="F:nucleic acid binding"/>
    <property type="evidence" value="ECO:0007669"/>
    <property type="project" value="InterPro"/>
</dbReference>
<dbReference type="GO" id="GO:0003724">
    <property type="term" value="F:RNA helicase activity"/>
    <property type="evidence" value="ECO:0007669"/>
    <property type="project" value="UniProtKB-EC"/>
</dbReference>
<dbReference type="GO" id="GO:0006397">
    <property type="term" value="P:mRNA processing"/>
    <property type="evidence" value="ECO:0007669"/>
    <property type="project" value="UniProtKB-KW"/>
</dbReference>
<dbReference type="GO" id="GO:0008380">
    <property type="term" value="P:RNA splicing"/>
    <property type="evidence" value="ECO:0007669"/>
    <property type="project" value="UniProtKB-KW"/>
</dbReference>
<dbReference type="CDD" id="cd17945">
    <property type="entry name" value="DEADc_DDX23"/>
    <property type="match status" value="1"/>
</dbReference>
<dbReference type="CDD" id="cd18787">
    <property type="entry name" value="SF2_C_DEAD"/>
    <property type="match status" value="1"/>
</dbReference>
<dbReference type="FunFam" id="3.40.50.300:FF:000322">
    <property type="entry name" value="probable ATP-dependent RNA helicase DDX23"/>
    <property type="match status" value="1"/>
</dbReference>
<dbReference type="Gene3D" id="3.40.50.300">
    <property type="entry name" value="P-loop containing nucleotide triphosphate hydrolases"/>
    <property type="match status" value="2"/>
</dbReference>
<dbReference type="InterPro" id="IPR011545">
    <property type="entry name" value="DEAD/DEAH_box_helicase_dom"/>
</dbReference>
<dbReference type="InterPro" id="IPR014001">
    <property type="entry name" value="Helicase_ATP-bd"/>
</dbReference>
<dbReference type="InterPro" id="IPR001650">
    <property type="entry name" value="Helicase_C-like"/>
</dbReference>
<dbReference type="InterPro" id="IPR027417">
    <property type="entry name" value="P-loop_NTPase"/>
</dbReference>
<dbReference type="InterPro" id="IPR000629">
    <property type="entry name" value="RNA-helicase_DEAD-box_CS"/>
</dbReference>
<dbReference type="InterPro" id="IPR014014">
    <property type="entry name" value="RNA_helicase_DEAD_Q_motif"/>
</dbReference>
<dbReference type="PANTHER" id="PTHR47958">
    <property type="entry name" value="ATP-DEPENDENT RNA HELICASE DBP3"/>
    <property type="match status" value="1"/>
</dbReference>
<dbReference type="Pfam" id="PF25430">
    <property type="entry name" value="DDX23"/>
    <property type="match status" value="1"/>
</dbReference>
<dbReference type="Pfam" id="PF00270">
    <property type="entry name" value="DEAD"/>
    <property type="match status" value="1"/>
</dbReference>
<dbReference type="Pfam" id="PF00271">
    <property type="entry name" value="Helicase_C"/>
    <property type="match status" value="1"/>
</dbReference>
<dbReference type="SMART" id="SM00487">
    <property type="entry name" value="DEXDc"/>
    <property type="match status" value="1"/>
</dbReference>
<dbReference type="SMART" id="SM00490">
    <property type="entry name" value="HELICc"/>
    <property type="match status" value="1"/>
</dbReference>
<dbReference type="SUPFAM" id="SSF52540">
    <property type="entry name" value="P-loop containing nucleoside triphosphate hydrolases"/>
    <property type="match status" value="1"/>
</dbReference>
<dbReference type="PROSITE" id="PS00039">
    <property type="entry name" value="DEAD_ATP_HELICASE"/>
    <property type="match status" value="1"/>
</dbReference>
<dbReference type="PROSITE" id="PS51192">
    <property type="entry name" value="HELICASE_ATP_BIND_1"/>
    <property type="match status" value="1"/>
</dbReference>
<dbReference type="PROSITE" id="PS51194">
    <property type="entry name" value="HELICASE_CTER"/>
    <property type="match status" value="1"/>
</dbReference>
<dbReference type="PROSITE" id="PS51195">
    <property type="entry name" value="Q_MOTIF"/>
    <property type="match status" value="1"/>
</dbReference>
<organism>
    <name type="scientific">Neosartorya fischeri (strain ATCC 1020 / DSM 3700 / CBS 544.65 / FGSC A1164 / JCM 1740 / NRRL 181 / WB 181)</name>
    <name type="common">Aspergillus fischerianus</name>
    <dbReference type="NCBI Taxonomy" id="331117"/>
    <lineage>
        <taxon>Eukaryota</taxon>
        <taxon>Fungi</taxon>
        <taxon>Dikarya</taxon>
        <taxon>Ascomycota</taxon>
        <taxon>Pezizomycotina</taxon>
        <taxon>Eurotiomycetes</taxon>
        <taxon>Eurotiomycetidae</taxon>
        <taxon>Eurotiales</taxon>
        <taxon>Aspergillaceae</taxon>
        <taxon>Aspergillus</taxon>
        <taxon>Aspergillus subgen. Fumigati</taxon>
    </lineage>
</organism>
<accession>A1CX72</accession>
<name>PRP28_NEOFI</name>
<evidence type="ECO:0000250" key="1"/>
<evidence type="ECO:0000255" key="2">
    <source>
        <dbReference type="PROSITE-ProRule" id="PRU00541"/>
    </source>
</evidence>
<evidence type="ECO:0000255" key="3">
    <source>
        <dbReference type="PROSITE-ProRule" id="PRU00542"/>
    </source>
</evidence>
<evidence type="ECO:0000256" key="4">
    <source>
        <dbReference type="SAM" id="MobiDB-lite"/>
    </source>
</evidence>
<evidence type="ECO:0000305" key="5"/>
<feature type="chain" id="PRO_0000282482" description="Pre-mRNA-splicing ATP-dependent RNA helicase prp28">
    <location>
        <begin position="1"/>
        <end position="796"/>
    </location>
</feature>
<feature type="domain" description="Helicase ATP-binding" evidence="2">
    <location>
        <begin position="395"/>
        <end position="595"/>
    </location>
</feature>
<feature type="domain" description="Helicase C-terminal" evidence="3">
    <location>
        <begin position="606"/>
        <end position="769"/>
    </location>
</feature>
<feature type="region of interest" description="Disordered" evidence="4">
    <location>
        <begin position="1"/>
        <end position="81"/>
    </location>
</feature>
<feature type="region of interest" description="Disordered" evidence="4">
    <location>
        <begin position="113"/>
        <end position="212"/>
    </location>
</feature>
<feature type="region of interest" description="Disordered" evidence="4">
    <location>
        <begin position="760"/>
        <end position="796"/>
    </location>
</feature>
<feature type="short sequence motif" description="Q motif">
    <location>
        <begin position="364"/>
        <end position="392"/>
    </location>
</feature>
<feature type="short sequence motif" description="DEAD box">
    <location>
        <begin position="523"/>
        <end position="526"/>
    </location>
</feature>
<feature type="compositionally biased region" description="Polar residues" evidence="4">
    <location>
        <begin position="1"/>
        <end position="12"/>
    </location>
</feature>
<feature type="compositionally biased region" description="Pro residues" evidence="4">
    <location>
        <begin position="18"/>
        <end position="60"/>
    </location>
</feature>
<feature type="compositionally biased region" description="Basic and acidic residues" evidence="4">
    <location>
        <begin position="113"/>
        <end position="126"/>
    </location>
</feature>
<feature type="compositionally biased region" description="Polar residues" evidence="4">
    <location>
        <begin position="127"/>
        <end position="148"/>
    </location>
</feature>
<feature type="compositionally biased region" description="Basic and acidic residues" evidence="4">
    <location>
        <begin position="761"/>
        <end position="771"/>
    </location>
</feature>
<feature type="compositionally biased region" description="Polar residues" evidence="4">
    <location>
        <begin position="786"/>
        <end position="796"/>
    </location>
</feature>
<feature type="binding site" evidence="2">
    <location>
        <begin position="408"/>
        <end position="415"/>
    </location>
    <ligand>
        <name>ATP</name>
        <dbReference type="ChEBI" id="CHEBI:30616"/>
    </ligand>
</feature>
<protein>
    <recommendedName>
        <fullName>Pre-mRNA-splicing ATP-dependent RNA helicase prp28</fullName>
        <ecNumber>3.6.4.13</ecNumber>
    </recommendedName>
</protein>
<proteinExistence type="inferred from homology"/>